<organism>
    <name type="scientific">Ganoderma lucidum</name>
    <name type="common">Ling zhi medicinal fungus</name>
    <name type="synonym">Bracket fungus</name>
    <dbReference type="NCBI Taxonomy" id="5315"/>
    <lineage>
        <taxon>Eukaryota</taxon>
        <taxon>Fungi</taxon>
        <taxon>Dikarya</taxon>
        <taxon>Basidiomycota</taxon>
        <taxon>Agaricomycotina</taxon>
        <taxon>Agaricomycetes</taxon>
        <taxon>Polyporales</taxon>
        <taxon>Polyporaceae</taxon>
        <taxon>Ganoderma</taxon>
    </lineage>
</organism>
<proteinExistence type="evidence at protein level"/>
<accession>P86051</accession>
<protein>
    <recommendedName>
        <fullName>Fibrinolytic zinc metalloproteinase</fullName>
        <ecNumber>3.4.24.-</ecNumber>
    </recommendedName>
</protein>
<sequence length="20" mass="2472">QQRFPQRYVQLVITVDHVMN</sequence>
<comment type="function">
    <text evidence="2">Hydrolyzes alpha and beta chains of human fibrinogen and human fibrin. No activity against the gamma chain of human fibrinogen, human thrombin, bovine serum albumin, ovalbumin and hemoglobin. Has anticoagulant activity on human plasma and protects mice against death due from experimentally induced platelet thromboembolism with an ED(50) of 40 ug/kg.</text>
</comment>
<comment type="cofactor">
    <cofactor evidence="2">
        <name>Zn(2+)</name>
        <dbReference type="ChEBI" id="CHEBI:29105"/>
    </cofactor>
    <text evidence="2">Binds 1 zinc ion per subunit.</text>
</comment>
<comment type="subcellular location">
    <subcellularLocation>
        <location evidence="2">Secreted</location>
    </subcellularLocation>
</comment>
<comment type="miscellaneous">
    <text evidence="2">On the 2D-gel the determined MW is: 43 kDa.</text>
</comment>
<feature type="chain" id="PRO_0000355077" description="Fibrinolytic zinc metalloproteinase">
    <location>
        <begin position="1"/>
        <end position="20" status="greater than"/>
    </location>
</feature>
<feature type="domain" description="Peptidase M12B" evidence="1">
    <location>
        <begin position="7"/>
        <end position="20" status="greater than"/>
    </location>
</feature>
<feature type="non-terminal residue" evidence="3">
    <location>
        <position position="20"/>
    </location>
</feature>
<name>FIBR_GANLU</name>
<evidence type="ECO:0000255" key="1">
    <source>
        <dbReference type="PROSITE-ProRule" id="PRU00276"/>
    </source>
</evidence>
<evidence type="ECO:0000269" key="2">
    <source ref="1"/>
</evidence>
<evidence type="ECO:0000303" key="3">
    <source ref="1"/>
</evidence>
<evidence type="ECO:0000305" key="4"/>
<dbReference type="EC" id="3.4.24.-"/>
<dbReference type="GO" id="GO:0005576">
    <property type="term" value="C:extracellular region"/>
    <property type="evidence" value="ECO:0007669"/>
    <property type="project" value="UniProtKB-SubCell"/>
</dbReference>
<dbReference type="GO" id="GO:0046872">
    <property type="term" value="F:metal ion binding"/>
    <property type="evidence" value="ECO:0007669"/>
    <property type="project" value="UniProtKB-KW"/>
</dbReference>
<dbReference type="GO" id="GO:0008237">
    <property type="term" value="F:metallopeptidase activity"/>
    <property type="evidence" value="ECO:0007669"/>
    <property type="project" value="UniProtKB-KW"/>
</dbReference>
<dbReference type="GO" id="GO:0006508">
    <property type="term" value="P:proteolysis"/>
    <property type="evidence" value="ECO:0007669"/>
    <property type="project" value="UniProtKB-KW"/>
</dbReference>
<keyword id="KW-0903">Direct protein sequencing</keyword>
<keyword id="KW-0378">Hydrolase</keyword>
<keyword id="KW-0479">Metal-binding</keyword>
<keyword id="KW-0482">Metalloprotease</keyword>
<keyword id="KW-0645">Protease</keyword>
<keyword id="KW-0964">Secreted</keyword>
<keyword id="KW-0862">Zinc</keyword>
<reference evidence="4" key="1">
    <citation type="submission" date="2008-09" db="UniProtKB">
        <title>Large scale production of fibrinolytic protease from an edible mushroom Ganoderma lucidum.</title>
        <authorList>
            <person name="Kumaran S."/>
            <person name="Kaviyarasan V."/>
        </authorList>
    </citation>
    <scope>PROTEIN SEQUENCE</scope>
    <scope>FUNCTION</scope>
    <scope>COFACTOR</scope>
    <scope>SUBCELLULAR LOCATION</scope>
    <source>
        <tissue evidence="2">Fruiting body</tissue>
    </source>
</reference>